<sequence>MPEHDVRLQQLTVWLDEQLNDLFRDNAWGEVPAGSLTAASSDASFRRYFRWQGAGHSFVIMDAPPPQENCRPFVAIDHLLASADVHVPLIHAQDLERGFLLLGDLGTQTYLDIINADNADGLFADAIDALLKFQRLPMDAPLPSYDDALLRREVELFPEWYVGRELGLTFTDAQKATWQRVSQLLIDSALAQPKVLVHRDYMPRNLMQSTPNPGVLDFQDAVYGPVTYDITCLFKDAFVSWPQARVEGWLGDYWQQAQAAGIPVHAEFEAFHRASDLMGVQRHLKVIGIFARICHRDGKPRYLGDVPRFFAYINEVIGRRPELAELGELIAELQAGARA</sequence>
<organism>
    <name type="scientific">Pseudomonas putida (strain ATCC 47054 / DSM 6125 / CFBP 8728 / NCIMB 11950 / KT2440)</name>
    <dbReference type="NCBI Taxonomy" id="160488"/>
    <lineage>
        <taxon>Bacteria</taxon>
        <taxon>Pseudomonadati</taxon>
        <taxon>Pseudomonadota</taxon>
        <taxon>Gammaproteobacteria</taxon>
        <taxon>Pseudomonadales</taxon>
        <taxon>Pseudomonadaceae</taxon>
        <taxon>Pseudomonas</taxon>
    </lineage>
</organism>
<name>AMGK_PSEPK</name>
<accession>Q88QT3</accession>
<proteinExistence type="evidence at protein level"/>
<protein>
    <recommendedName>
        <fullName evidence="4">N-acetylmuramate/N-acetylglucosamine kinase</fullName>
        <shortName evidence="4">MurNAc/GlcNAc kinase</shortName>
        <ecNumber evidence="1">2.7.1.221</ecNumber>
    </recommendedName>
    <alternativeName>
        <fullName evidence="2">Anomeric sugar kinase</fullName>
    </alternativeName>
</protein>
<dbReference type="EC" id="2.7.1.221" evidence="1"/>
<dbReference type="EMBL" id="AE015451">
    <property type="protein sequence ID" value="AAN66035.1"/>
    <property type="molecule type" value="Genomic_DNA"/>
</dbReference>
<dbReference type="RefSeq" id="NP_742571.1">
    <property type="nucleotide sequence ID" value="NC_002947.4"/>
</dbReference>
<dbReference type="RefSeq" id="WP_010951744.1">
    <property type="nucleotide sequence ID" value="NZ_CP169744.1"/>
</dbReference>
<dbReference type="SMR" id="Q88QT3"/>
<dbReference type="STRING" id="160488.PP_0405"/>
<dbReference type="PaxDb" id="160488-PP_0405"/>
<dbReference type="DNASU" id="1044120"/>
<dbReference type="KEGG" id="ppu:PP_0405"/>
<dbReference type="PATRIC" id="fig|160488.4.peg.437"/>
<dbReference type="eggNOG" id="COG3178">
    <property type="taxonomic scope" value="Bacteria"/>
</dbReference>
<dbReference type="HOGENOM" id="CLU_021467_1_0_6"/>
<dbReference type="OrthoDB" id="9809275at2"/>
<dbReference type="PhylomeDB" id="Q88QT3"/>
<dbReference type="BioCyc" id="MetaCyc:G1G01-442-MONOMER"/>
<dbReference type="BioCyc" id="PPUT160488:G1G01-442-MONOMER"/>
<dbReference type="BRENDA" id="2.7.1.221">
    <property type="organism ID" value="5092"/>
</dbReference>
<dbReference type="UniPathway" id="UPA00544"/>
<dbReference type="Proteomes" id="UP000000556">
    <property type="component" value="Chromosome"/>
</dbReference>
<dbReference type="GO" id="GO:0005524">
    <property type="term" value="F:ATP binding"/>
    <property type="evidence" value="ECO:0000314"/>
    <property type="project" value="UniProtKB"/>
</dbReference>
<dbReference type="GO" id="GO:0019200">
    <property type="term" value="F:carbohydrate kinase activity"/>
    <property type="evidence" value="ECO:0000314"/>
    <property type="project" value="UniProtKB"/>
</dbReference>
<dbReference type="GO" id="GO:0071555">
    <property type="term" value="P:cell wall organization"/>
    <property type="evidence" value="ECO:0007669"/>
    <property type="project" value="UniProtKB-KW"/>
</dbReference>
<dbReference type="GO" id="GO:0097172">
    <property type="term" value="P:N-acetylmuramic acid metabolic process"/>
    <property type="evidence" value="ECO:0000314"/>
    <property type="project" value="UniProtKB"/>
</dbReference>
<dbReference type="GO" id="GO:0009252">
    <property type="term" value="P:peptidoglycan biosynthetic process"/>
    <property type="evidence" value="ECO:0007669"/>
    <property type="project" value="UniProtKB-KW"/>
</dbReference>
<dbReference type="GO" id="GO:0009254">
    <property type="term" value="P:peptidoglycan turnover"/>
    <property type="evidence" value="ECO:0000315"/>
    <property type="project" value="UniProtKB"/>
</dbReference>
<dbReference type="GO" id="GO:0008360">
    <property type="term" value="P:regulation of cell shape"/>
    <property type="evidence" value="ECO:0007669"/>
    <property type="project" value="UniProtKB-KW"/>
</dbReference>
<dbReference type="GO" id="GO:0046677">
    <property type="term" value="P:response to antibiotic"/>
    <property type="evidence" value="ECO:0007669"/>
    <property type="project" value="UniProtKB-KW"/>
</dbReference>
<dbReference type="FunFam" id="3.30.200.20:FF:000744">
    <property type="entry name" value="Aminoglycoside phosphotransferase"/>
    <property type="match status" value="1"/>
</dbReference>
<dbReference type="FunFam" id="3.90.1200.10:FF:000017">
    <property type="entry name" value="Aminoglycoside phosphotransferase"/>
    <property type="match status" value="1"/>
</dbReference>
<dbReference type="Gene3D" id="3.90.1200.10">
    <property type="match status" value="1"/>
</dbReference>
<dbReference type="Gene3D" id="3.30.200.20">
    <property type="entry name" value="Phosphorylase Kinase, domain 1"/>
    <property type="match status" value="1"/>
</dbReference>
<dbReference type="InterPro" id="IPR002575">
    <property type="entry name" value="Aminoglycoside_PTrfase"/>
</dbReference>
<dbReference type="InterPro" id="IPR011009">
    <property type="entry name" value="Kinase-like_dom_sf"/>
</dbReference>
<dbReference type="PANTHER" id="PTHR33540:SF1">
    <property type="entry name" value="N-ACETYLMURAMATE_N-ACETYLGLUCOSAMINE KINASE"/>
    <property type="match status" value="1"/>
</dbReference>
<dbReference type="PANTHER" id="PTHR33540">
    <property type="entry name" value="TRNA THREONYLCARBAMOYLADENOSINE BIOSYNTHESIS PROTEIN TSAE"/>
    <property type="match status" value="1"/>
</dbReference>
<dbReference type="Pfam" id="PF01636">
    <property type="entry name" value="APH"/>
    <property type="match status" value="1"/>
</dbReference>
<dbReference type="SUPFAM" id="SSF56112">
    <property type="entry name" value="Protein kinase-like (PK-like)"/>
    <property type="match status" value="1"/>
</dbReference>
<keyword id="KW-0046">Antibiotic resistance</keyword>
<keyword id="KW-0067">ATP-binding</keyword>
<keyword id="KW-0119">Carbohydrate metabolism</keyword>
<keyword id="KW-0133">Cell shape</keyword>
<keyword id="KW-0961">Cell wall biogenesis/degradation</keyword>
<keyword id="KW-0418">Kinase</keyword>
<keyword id="KW-0547">Nucleotide-binding</keyword>
<keyword id="KW-0573">Peptidoglycan synthesis</keyword>
<keyword id="KW-1185">Reference proteome</keyword>
<keyword id="KW-0808">Transferase</keyword>
<feature type="chain" id="PRO_0000441265" description="N-acetylmuramate/N-acetylglucosamine kinase">
    <location>
        <begin position="1"/>
        <end position="339"/>
    </location>
</feature>
<gene>
    <name evidence="2" type="primary">amgK</name>
    <name evidence="5" type="ordered locus">PP_0405</name>
</gene>
<reference key="1">
    <citation type="journal article" date="2002" name="Environ. Microbiol.">
        <title>Complete genome sequence and comparative analysis of the metabolically versatile Pseudomonas putida KT2440.</title>
        <authorList>
            <person name="Nelson K.E."/>
            <person name="Weinel C."/>
            <person name="Paulsen I.T."/>
            <person name="Dodson R.J."/>
            <person name="Hilbert H."/>
            <person name="Martins dos Santos V.A.P."/>
            <person name="Fouts D.E."/>
            <person name="Gill S.R."/>
            <person name="Pop M."/>
            <person name="Holmes M."/>
            <person name="Brinkac L.M."/>
            <person name="Beanan M.J."/>
            <person name="DeBoy R.T."/>
            <person name="Daugherty S.C."/>
            <person name="Kolonay J.F."/>
            <person name="Madupu R."/>
            <person name="Nelson W.C."/>
            <person name="White O."/>
            <person name="Peterson J.D."/>
            <person name="Khouri H.M."/>
            <person name="Hance I."/>
            <person name="Chris Lee P."/>
            <person name="Holtzapple E.K."/>
            <person name="Scanlan D."/>
            <person name="Tran K."/>
            <person name="Moazzez A."/>
            <person name="Utterback T.R."/>
            <person name="Rizzo M."/>
            <person name="Lee K."/>
            <person name="Kosack D."/>
            <person name="Moestl D."/>
            <person name="Wedler H."/>
            <person name="Lauber J."/>
            <person name="Stjepandic D."/>
            <person name="Hoheisel J."/>
            <person name="Straetz M."/>
            <person name="Heim S."/>
            <person name="Kiewitz C."/>
            <person name="Eisen J.A."/>
            <person name="Timmis K.N."/>
            <person name="Duesterhoeft A."/>
            <person name="Tuemmler B."/>
            <person name="Fraser C.M."/>
        </authorList>
    </citation>
    <scope>NUCLEOTIDE SEQUENCE [LARGE SCALE GENOMIC DNA]</scope>
    <source>
        <strain>ATCC 47054 / DSM 6125 / CFBP 8728 / NCIMB 11950 / KT2440</strain>
    </source>
</reference>
<reference key="2">
    <citation type="journal article" date="2013" name="Nat. Chem. Biol.">
        <title>A cell wall recycling shortcut that bypasses peptidoglycan de novo biosynthesis.</title>
        <authorList>
            <person name="Gisin J."/>
            <person name="Schneider A."/>
            <person name="Naegele B."/>
            <person name="Borisova M."/>
            <person name="Mayer C."/>
        </authorList>
    </citation>
    <scope>FUNCTION</scope>
    <scope>CATALYTIC ACTIVITY</scope>
    <scope>BIOPHYSICOCHEMICAL PROPERTIES</scope>
    <scope>SUBSTRATE SPECIFICITY</scope>
    <scope>DISRUPTION PHENOTYPE</scope>
    <scope>PATHWAY</scope>
</reference>
<comment type="function">
    <text evidence="1">Sugar kinase that catalyzes the ATP-dependent phosphorylation of N-acetylmuramate (MurNAc) and N-acetylglucosamine (GlcNAc) at its C1 hydroxyl group, leading to MurNAc alpha-1P and GlcNAc alpha-1P, respectively. Is involved in peptidoglycan recycling as part of a cell wall recycling pathway that bypasses de novo biosynthesis of the peptidoglycan precursor UDP-MurNAc. Plays a role in intrinsic resistance to fosfomycin, which targets the de novo synthesis of UDP-MurNAc. Is also able to use N-acetylgalactosamine (GalNAc) as a substrate, but not N-acetylmannosamine, N-deacetylated sugars or glucose.</text>
</comment>
<comment type="catalytic activity">
    <reaction evidence="1">
        <text>N-acetyl-D-muramate + ATP = N-acetyl-alpha-D-muramate 1-phosphate + ADP + H(+)</text>
        <dbReference type="Rhea" id="RHEA:53720"/>
        <dbReference type="ChEBI" id="CHEBI:15378"/>
        <dbReference type="ChEBI" id="CHEBI:28881"/>
        <dbReference type="ChEBI" id="CHEBI:30616"/>
        <dbReference type="ChEBI" id="CHEBI:137594"/>
        <dbReference type="ChEBI" id="CHEBI:456216"/>
        <dbReference type="EC" id="2.7.1.221"/>
    </reaction>
</comment>
<comment type="catalytic activity">
    <reaction evidence="1">
        <text>N-acetyl-D-glucosamine + ATP = N-acetyl-alpha-D-glucosamine 1-phosphate + ADP + H(+)</text>
        <dbReference type="Rhea" id="RHEA:53724"/>
        <dbReference type="ChEBI" id="CHEBI:15378"/>
        <dbReference type="ChEBI" id="CHEBI:30616"/>
        <dbReference type="ChEBI" id="CHEBI:57776"/>
        <dbReference type="ChEBI" id="CHEBI:456216"/>
        <dbReference type="ChEBI" id="CHEBI:506227"/>
    </reaction>
</comment>
<comment type="biophysicochemical properties">
    <kinetics>
        <KM evidence="1">80.5 uM for MurNAc (at pH 7.6 and 25 degrees Celsius)</KM>
        <KM evidence="1">176.6 uM for GlcNAc(at pH 7.6 and 25 degrees Celsius)</KM>
        <KM evidence="1">50.8 uM for ATP(at pH 7.6 and 25 degrees Celsius)</KM>
        <text evidence="1">kcat is 5.15 sec(-1) for MurNAc phosphorylation. kcat is 6.64 sec(-1) for GlcNAc phosphorylation (at pH 7.6 and 25 degrees Celsius).</text>
    </kinetics>
</comment>
<comment type="pathway">
    <text evidence="1">Cell wall biogenesis; peptidoglycan recycling.</text>
</comment>
<comment type="disruption phenotype">
    <text evidence="1">Cells lacking this gene accumulate GlcNAc and MurNAc. Deletion of this gene increases fosfomycin sensitivity.</text>
</comment>
<comment type="similarity">
    <text evidence="3">Belongs to the kinase AmgK family.</text>
</comment>
<evidence type="ECO:0000269" key="1">
    <source>
    </source>
</evidence>
<evidence type="ECO:0000303" key="2">
    <source>
    </source>
</evidence>
<evidence type="ECO:0000305" key="3"/>
<evidence type="ECO:0000305" key="4">
    <source>
    </source>
</evidence>
<evidence type="ECO:0000312" key="5">
    <source>
        <dbReference type="EMBL" id="AAN66035.1"/>
    </source>
</evidence>